<reference key="1">
    <citation type="journal article" date="2004" name="Proc. Natl. Acad. Sci. U.S.A.">
        <title>Complete genomes of two clinical Staphylococcus aureus strains: evidence for the rapid evolution of virulence and drug resistance.</title>
        <authorList>
            <person name="Holden M.T.G."/>
            <person name="Feil E.J."/>
            <person name="Lindsay J.A."/>
            <person name="Peacock S.J."/>
            <person name="Day N.P.J."/>
            <person name="Enright M.C."/>
            <person name="Foster T.J."/>
            <person name="Moore C.E."/>
            <person name="Hurst L."/>
            <person name="Atkin R."/>
            <person name="Barron A."/>
            <person name="Bason N."/>
            <person name="Bentley S.D."/>
            <person name="Chillingworth C."/>
            <person name="Chillingworth T."/>
            <person name="Churcher C."/>
            <person name="Clark L."/>
            <person name="Corton C."/>
            <person name="Cronin A."/>
            <person name="Doggett J."/>
            <person name="Dowd L."/>
            <person name="Feltwell T."/>
            <person name="Hance Z."/>
            <person name="Harris B."/>
            <person name="Hauser H."/>
            <person name="Holroyd S."/>
            <person name="Jagels K."/>
            <person name="James K.D."/>
            <person name="Lennard N."/>
            <person name="Line A."/>
            <person name="Mayes R."/>
            <person name="Moule S."/>
            <person name="Mungall K."/>
            <person name="Ormond D."/>
            <person name="Quail M.A."/>
            <person name="Rabbinowitsch E."/>
            <person name="Rutherford K.M."/>
            <person name="Sanders M."/>
            <person name="Sharp S."/>
            <person name="Simmonds M."/>
            <person name="Stevens K."/>
            <person name="Whitehead S."/>
            <person name="Barrell B.G."/>
            <person name="Spratt B.G."/>
            <person name="Parkhill J."/>
        </authorList>
    </citation>
    <scope>NUCLEOTIDE SEQUENCE [LARGE SCALE GENOMIC DNA]</scope>
    <source>
        <strain>MSSA476</strain>
    </source>
</reference>
<dbReference type="EMBL" id="BX571857">
    <property type="protein sequence ID" value="CAG44250.1"/>
    <property type="molecule type" value="Genomic_DNA"/>
</dbReference>
<dbReference type="RefSeq" id="WP_001058988.1">
    <property type="nucleotide sequence ID" value="NC_002953.3"/>
</dbReference>
<dbReference type="SMR" id="Q6G6C6"/>
<dbReference type="KEGG" id="sas:SAS2434"/>
<dbReference type="HOGENOM" id="CLU_005070_4_3_9"/>
<dbReference type="GO" id="GO:0005737">
    <property type="term" value="C:cytoplasm"/>
    <property type="evidence" value="ECO:0007669"/>
    <property type="project" value="TreeGrafter"/>
</dbReference>
<dbReference type="GO" id="GO:0005524">
    <property type="term" value="F:ATP binding"/>
    <property type="evidence" value="ECO:0007669"/>
    <property type="project" value="UniProtKB-KW"/>
</dbReference>
<dbReference type="GO" id="GO:0016887">
    <property type="term" value="F:ATP hydrolysis activity"/>
    <property type="evidence" value="ECO:0007669"/>
    <property type="project" value="InterPro"/>
</dbReference>
<dbReference type="GO" id="GO:0034605">
    <property type="term" value="P:cellular response to heat"/>
    <property type="evidence" value="ECO:0007669"/>
    <property type="project" value="TreeGrafter"/>
</dbReference>
<dbReference type="CDD" id="cd00009">
    <property type="entry name" value="AAA"/>
    <property type="match status" value="1"/>
</dbReference>
<dbReference type="CDD" id="cd19499">
    <property type="entry name" value="RecA-like_ClpB_Hsp104-like"/>
    <property type="match status" value="1"/>
</dbReference>
<dbReference type="FunFam" id="3.40.50.300:FF:000025">
    <property type="entry name" value="ATP-dependent Clp protease subunit"/>
    <property type="match status" value="1"/>
</dbReference>
<dbReference type="Gene3D" id="1.10.8.60">
    <property type="match status" value="2"/>
</dbReference>
<dbReference type="Gene3D" id="3.40.50.300">
    <property type="entry name" value="P-loop containing nucleotide triphosphate hydrolases"/>
    <property type="match status" value="2"/>
</dbReference>
<dbReference type="Gene3D" id="4.10.860.10">
    <property type="entry name" value="UVR domain"/>
    <property type="match status" value="1"/>
</dbReference>
<dbReference type="InterPro" id="IPR003593">
    <property type="entry name" value="AAA+_ATPase"/>
</dbReference>
<dbReference type="InterPro" id="IPR003959">
    <property type="entry name" value="ATPase_AAA_core"/>
</dbReference>
<dbReference type="InterPro" id="IPR019489">
    <property type="entry name" value="Clp_ATPase_C"/>
</dbReference>
<dbReference type="InterPro" id="IPR001270">
    <property type="entry name" value="ClpA/B"/>
</dbReference>
<dbReference type="InterPro" id="IPR041546">
    <property type="entry name" value="ClpA/ClpB_AAA_lid"/>
</dbReference>
<dbReference type="InterPro" id="IPR050130">
    <property type="entry name" value="ClpA_ClpB"/>
</dbReference>
<dbReference type="InterPro" id="IPR027417">
    <property type="entry name" value="P-loop_NTPase"/>
</dbReference>
<dbReference type="PANTHER" id="PTHR11638">
    <property type="entry name" value="ATP-DEPENDENT CLP PROTEASE"/>
    <property type="match status" value="1"/>
</dbReference>
<dbReference type="PANTHER" id="PTHR11638:SF188">
    <property type="entry name" value="ATP-DEPENDENT CLP PROTEASE ATP-BINDING SUBUNIT CLPL"/>
    <property type="match status" value="1"/>
</dbReference>
<dbReference type="Pfam" id="PF00004">
    <property type="entry name" value="AAA"/>
    <property type="match status" value="1"/>
</dbReference>
<dbReference type="Pfam" id="PF07724">
    <property type="entry name" value="AAA_2"/>
    <property type="match status" value="1"/>
</dbReference>
<dbReference type="Pfam" id="PF17871">
    <property type="entry name" value="AAA_lid_9"/>
    <property type="match status" value="1"/>
</dbReference>
<dbReference type="Pfam" id="PF10431">
    <property type="entry name" value="ClpB_D2-small"/>
    <property type="match status" value="1"/>
</dbReference>
<dbReference type="PRINTS" id="PR00300">
    <property type="entry name" value="CLPPROTEASEA"/>
</dbReference>
<dbReference type="SMART" id="SM00382">
    <property type="entry name" value="AAA"/>
    <property type="match status" value="2"/>
</dbReference>
<dbReference type="SMART" id="SM01086">
    <property type="entry name" value="ClpB_D2-small"/>
    <property type="match status" value="1"/>
</dbReference>
<dbReference type="SUPFAM" id="SSF52540">
    <property type="entry name" value="P-loop containing nucleoside triphosphate hydrolases"/>
    <property type="match status" value="2"/>
</dbReference>
<comment type="function">
    <text evidence="1">Required for the development of induced thermotolerance.</text>
</comment>
<comment type="similarity">
    <text evidence="4">Belongs to the ClpA/ClpB family. ClpL subfamily.</text>
</comment>
<feature type="chain" id="PRO_0000269501" description="ATP-dependent Clp protease ATP-binding subunit ClpL">
    <location>
        <begin position="1"/>
        <end position="701"/>
    </location>
</feature>
<feature type="domain" description="UVR">
    <location>
        <begin position="336"/>
        <end position="371"/>
    </location>
</feature>
<feature type="region of interest" description="Disordered" evidence="3">
    <location>
        <begin position="47"/>
        <end position="79"/>
    </location>
</feature>
<feature type="region of interest" description="I">
    <location>
        <begin position="81"/>
        <end position="332"/>
    </location>
</feature>
<feature type="region of interest" description="II">
    <location>
        <begin position="383"/>
        <end position="575"/>
    </location>
</feature>
<feature type="compositionally biased region" description="Polar residues" evidence="3">
    <location>
        <begin position="47"/>
        <end position="57"/>
    </location>
</feature>
<feature type="compositionally biased region" description="Low complexity" evidence="3">
    <location>
        <begin position="58"/>
        <end position="72"/>
    </location>
</feature>
<feature type="binding site" evidence="2">
    <location>
        <begin position="126"/>
        <end position="133"/>
    </location>
    <ligand>
        <name>ATP</name>
        <dbReference type="ChEBI" id="CHEBI:30616"/>
    </ligand>
</feature>
<feature type="binding site" evidence="2">
    <location>
        <begin position="457"/>
        <end position="464"/>
    </location>
    <ligand>
        <name>ATP</name>
        <dbReference type="ChEBI" id="CHEBI:30616"/>
    </ligand>
</feature>
<sequence length="701" mass="77836">MNNGFFNSDFDSIFRRMMQDMQGSNQVGNKKYYINGKEVSPEELAQLTQQGGNHSAEQSAQAFQQAAQRQQGQQGGNGNYLEQIGRNLTQEARDGLLDPVIGRDKEIQETAEVLSRRTKNNPILVGEAGVGKTAIVEGLAQAIVEGNVPAAIKDKEIISVDISSLEAGTQYRGAFEENIQKLIEGVKSSQNAVLFFDEIHQIIGSGATGSDSGSKGLSDILKPALSRGEISIIGATTQDEYRNNILKDAALTRRFNEVLVNEPSAKDTVEILKGIREKFEEHHQVKLPDDVLKACVDLSIQYIPQRLLPDKAIDVLDITAAHLSAQSPAVDKVETEKRISELENDKRKAVSAEEYKKADDIQNEIKSLQDKLENSNGEHTAVATVHDISDTIQRLTGIPVSQMDDNDIERLKNISNRLRSKIIGQDQAVEMVSRAIRRNRAGFDDGNRPIGSFLFVGPTGVGKTELAKQLAIDLFGNKDALIRLDMSEYSDTTAVSKMIGTTAGYVGYDDNSNTLTEKVRRNPYSVILFDEIEKANPQILTLLLQVMDDGNLTDGQGNVINFKNTIIICTSNAGFGNGNDAEEKDIMHEMKKFFRPEFLNRFNGIVEFLHLDKDALQDIVNLLLDDVQVTLDKKGITMDVSQDAKDWLIEEGYDEELGARPLRRIVEQQVRDKITDYYLDHTDVKHVDIDVEDNELVVKGK</sequence>
<organism>
    <name type="scientific">Staphylococcus aureus (strain MSSA476)</name>
    <dbReference type="NCBI Taxonomy" id="282459"/>
    <lineage>
        <taxon>Bacteria</taxon>
        <taxon>Bacillati</taxon>
        <taxon>Bacillota</taxon>
        <taxon>Bacilli</taxon>
        <taxon>Bacillales</taxon>
        <taxon>Staphylococcaceae</taxon>
        <taxon>Staphylococcus</taxon>
    </lineage>
</organism>
<keyword id="KW-0067">ATP-binding</keyword>
<keyword id="KW-0143">Chaperone</keyword>
<keyword id="KW-0547">Nucleotide-binding</keyword>
<evidence type="ECO:0000250" key="1"/>
<evidence type="ECO:0000255" key="2"/>
<evidence type="ECO:0000256" key="3">
    <source>
        <dbReference type="SAM" id="MobiDB-lite"/>
    </source>
</evidence>
<evidence type="ECO:0000305" key="4"/>
<accession>Q6G6C6</accession>
<name>CLPL_STAAS</name>
<protein>
    <recommendedName>
        <fullName>ATP-dependent Clp protease ATP-binding subunit ClpL</fullName>
    </recommendedName>
</protein>
<gene>
    <name type="primary">clpL</name>
    <name type="ordered locus">SAS2434</name>
</gene>
<proteinExistence type="inferred from homology"/>